<sequence length="105" mass="11532">MPLSPGLLLLLLSGATATAALPLEGGPTGRDSEHMQEAAGIRKSSLLTFLAWWFEWTSQASAGPLIGEEAREVARRQEGAPPQQSARRDRMPCRNFFWKTFSSCK</sequence>
<accession>O00230</accession>
<accession>Q5T6G0</accession>
<accession>Q6UX11</accession>
<organism>
    <name type="scientific">Homo sapiens</name>
    <name type="common">Human</name>
    <dbReference type="NCBI Taxonomy" id="9606"/>
    <lineage>
        <taxon>Eukaryota</taxon>
        <taxon>Metazoa</taxon>
        <taxon>Chordata</taxon>
        <taxon>Craniata</taxon>
        <taxon>Vertebrata</taxon>
        <taxon>Euteleostomi</taxon>
        <taxon>Mammalia</taxon>
        <taxon>Eutheria</taxon>
        <taxon>Euarchontoglires</taxon>
        <taxon>Primates</taxon>
        <taxon>Haplorrhini</taxon>
        <taxon>Catarrhini</taxon>
        <taxon>Hominidae</taxon>
        <taxon>Homo</taxon>
    </lineage>
</organism>
<protein>
    <recommendedName>
        <fullName>Cortistatin</fullName>
    </recommendedName>
    <component>
        <recommendedName>
            <fullName>Cortistatin-29</fullName>
        </recommendedName>
    </component>
    <component>
        <recommendedName>
            <fullName>Cortistatin-17</fullName>
        </recommendedName>
    </component>
</protein>
<dbReference type="EMBL" id="AB000263">
    <property type="protein sequence ID" value="BAA19770.1"/>
    <property type="molecule type" value="mRNA"/>
</dbReference>
<dbReference type="EMBL" id="AF013252">
    <property type="protein sequence ID" value="AAB66895.1"/>
    <property type="molecule type" value="mRNA"/>
</dbReference>
<dbReference type="EMBL" id="AL354956">
    <property type="status" value="NOT_ANNOTATED_CDS"/>
    <property type="molecule type" value="Genomic_DNA"/>
</dbReference>
<dbReference type="EMBL" id="CH471130">
    <property type="protein sequence ID" value="EAW71650.1"/>
    <property type="status" value="ALT_INIT"/>
    <property type="molecule type" value="Genomic_DNA"/>
</dbReference>
<dbReference type="EMBL" id="BC119724">
    <property type="protein sequence ID" value="AAI19725.1"/>
    <property type="status" value="ALT_INIT"/>
    <property type="molecule type" value="mRNA"/>
</dbReference>
<dbReference type="EMBL" id="BC119725">
    <property type="protein sequence ID" value="AAI19726.1"/>
    <property type="status" value="ALT_INIT"/>
    <property type="molecule type" value="mRNA"/>
</dbReference>
<dbReference type="EMBL" id="AY358561">
    <property type="protein sequence ID" value="AAQ89950.1"/>
    <property type="status" value="ALT_INIT"/>
    <property type="molecule type" value="mRNA"/>
</dbReference>
<dbReference type="CCDS" id="CCDS117.2"/>
<dbReference type="PIR" id="JC5414">
    <property type="entry name" value="JC5414"/>
</dbReference>
<dbReference type="RefSeq" id="NP_001293.3">
    <property type="nucleotide sequence ID" value="NM_001302.4"/>
</dbReference>
<dbReference type="PDB" id="7S8L">
    <property type="method" value="EM"/>
    <property type="resolution" value="2.45 A"/>
    <property type="chains" value="A=92-105"/>
</dbReference>
<dbReference type="PDB" id="7S8M">
    <property type="method" value="EM"/>
    <property type="resolution" value="2.54 A"/>
    <property type="chains" value="A=92-105"/>
</dbReference>
<dbReference type="PDB" id="7VDL">
    <property type="method" value="EM"/>
    <property type="resolution" value="3.22 A"/>
    <property type="chains" value="L=92-105"/>
</dbReference>
<dbReference type="PDB" id="7VV4">
    <property type="method" value="EM"/>
    <property type="resolution" value="2.97 A"/>
    <property type="chains" value="L=92-105"/>
</dbReference>
<dbReference type="PDB" id="8X8L">
    <property type="method" value="EM"/>
    <property type="resolution" value="2.70 A"/>
    <property type="chains" value="C=89-105"/>
</dbReference>
<dbReference type="PDBsum" id="7S8L"/>
<dbReference type="PDBsum" id="7S8M"/>
<dbReference type="PDBsum" id="7VDL"/>
<dbReference type="PDBsum" id="7VV4"/>
<dbReference type="PDBsum" id="8X8L"/>
<dbReference type="EMDB" id="EMD-24896"/>
<dbReference type="EMDB" id="EMD-24897"/>
<dbReference type="EMDB" id="EMD-31922"/>
<dbReference type="EMDB" id="EMD-32137"/>
<dbReference type="EMDB" id="EMD-38148"/>
<dbReference type="SMR" id="O00230"/>
<dbReference type="BioGRID" id="107718">
    <property type="interactions" value="20"/>
</dbReference>
<dbReference type="FunCoup" id="O00230">
    <property type="interactions" value="411"/>
</dbReference>
<dbReference type="IntAct" id="O00230">
    <property type="interactions" value="14"/>
</dbReference>
<dbReference type="STRING" id="9606.ENSP00000366248"/>
<dbReference type="iPTMnet" id="O00230"/>
<dbReference type="PhosphoSitePlus" id="O00230"/>
<dbReference type="BioMuta" id="CORT"/>
<dbReference type="MassIVE" id="O00230"/>
<dbReference type="PaxDb" id="9606-ENSP00000366248"/>
<dbReference type="PeptideAtlas" id="O00230"/>
<dbReference type="Antibodypedia" id="57276">
    <property type="antibodies" value="52 antibodies from 11 providers"/>
</dbReference>
<dbReference type="DNASU" id="1325"/>
<dbReference type="Ensembl" id="ENST00000377049.4">
    <property type="protein sequence ID" value="ENSP00000366248.4"/>
    <property type="gene ID" value="ENSG00000241563.4"/>
</dbReference>
<dbReference type="GeneID" id="1325"/>
<dbReference type="KEGG" id="hsa:1325"/>
<dbReference type="MANE-Select" id="ENST00000377049.4">
    <property type="protein sequence ID" value="ENSP00000366248.4"/>
    <property type="RefSeq nucleotide sequence ID" value="NM_001302.5"/>
    <property type="RefSeq protein sequence ID" value="NP_001293.3"/>
</dbReference>
<dbReference type="UCSC" id="uc001ari.5">
    <property type="organism name" value="human"/>
</dbReference>
<dbReference type="AGR" id="HGNC:2257"/>
<dbReference type="CTD" id="1325"/>
<dbReference type="DisGeNET" id="1325"/>
<dbReference type="GeneCards" id="CORT"/>
<dbReference type="HGNC" id="HGNC:2257">
    <property type="gene designation" value="CORT"/>
</dbReference>
<dbReference type="HPA" id="ENSG00000241563">
    <property type="expression patterns" value="Tissue enriched (brain)"/>
</dbReference>
<dbReference type="MIM" id="602784">
    <property type="type" value="gene"/>
</dbReference>
<dbReference type="neXtProt" id="NX_O00230"/>
<dbReference type="OpenTargets" id="ENSG00000241563"/>
<dbReference type="PharmGKB" id="PA26773"/>
<dbReference type="VEuPathDB" id="HostDB:ENSG00000241563"/>
<dbReference type="eggNOG" id="ENOG502S1NT">
    <property type="taxonomic scope" value="Eukaryota"/>
</dbReference>
<dbReference type="GeneTree" id="ENSGT00730000111752"/>
<dbReference type="HOGENOM" id="CLU_124515_0_0_1"/>
<dbReference type="InParanoid" id="O00230"/>
<dbReference type="OMA" id="TRCKNFF"/>
<dbReference type="OrthoDB" id="9438385at2759"/>
<dbReference type="PAN-GO" id="O00230">
    <property type="GO annotations" value="5 GO annotations based on evolutionary models"/>
</dbReference>
<dbReference type="PhylomeDB" id="O00230"/>
<dbReference type="PathwayCommons" id="O00230"/>
<dbReference type="Reactome" id="R-HSA-375276">
    <property type="pathway name" value="Peptide ligand-binding receptors"/>
</dbReference>
<dbReference type="Reactome" id="R-HSA-418594">
    <property type="pathway name" value="G alpha (i) signalling events"/>
</dbReference>
<dbReference type="SignaLink" id="O00230"/>
<dbReference type="SIGNOR" id="O00230"/>
<dbReference type="BioGRID-ORCS" id="1325">
    <property type="hits" value="29 hits in 1110 CRISPR screens"/>
</dbReference>
<dbReference type="ChiTaRS" id="CORT">
    <property type="organism name" value="human"/>
</dbReference>
<dbReference type="GeneWiki" id="Cortistatin_(neuropeptide)"/>
<dbReference type="GenomeRNAi" id="1325"/>
<dbReference type="Pharos" id="O00230">
    <property type="development level" value="Tbio"/>
</dbReference>
<dbReference type="PRO" id="PR:O00230"/>
<dbReference type="Proteomes" id="UP000005640">
    <property type="component" value="Chromosome 1"/>
</dbReference>
<dbReference type="RNAct" id="O00230">
    <property type="molecule type" value="protein"/>
</dbReference>
<dbReference type="Bgee" id="ENSG00000241563">
    <property type="expression patterns" value="Expressed in putamen and 94 other cell types or tissues"/>
</dbReference>
<dbReference type="GO" id="GO:0005576">
    <property type="term" value="C:extracellular region"/>
    <property type="evidence" value="ECO:0000304"/>
    <property type="project" value="Reactome"/>
</dbReference>
<dbReference type="GO" id="GO:0005615">
    <property type="term" value="C:extracellular space"/>
    <property type="evidence" value="ECO:0000318"/>
    <property type="project" value="GO_Central"/>
</dbReference>
<dbReference type="GO" id="GO:0045202">
    <property type="term" value="C:synapse"/>
    <property type="evidence" value="ECO:0007669"/>
    <property type="project" value="GOC"/>
</dbReference>
<dbReference type="GO" id="GO:0001664">
    <property type="term" value="F:G protein-coupled receptor binding"/>
    <property type="evidence" value="ECO:0000353"/>
    <property type="project" value="UniProtKB"/>
</dbReference>
<dbReference type="GO" id="GO:0005184">
    <property type="term" value="F:neuropeptide hormone activity"/>
    <property type="evidence" value="ECO:0000314"/>
    <property type="project" value="UniProtKB"/>
</dbReference>
<dbReference type="GO" id="GO:0007193">
    <property type="term" value="P:adenylate cyclase-inhibiting G protein-coupled receptor signaling pathway"/>
    <property type="evidence" value="ECO:0000314"/>
    <property type="project" value="UniProtKB"/>
</dbReference>
<dbReference type="GO" id="GO:0007268">
    <property type="term" value="P:chemical synaptic transmission"/>
    <property type="evidence" value="ECO:0000303"/>
    <property type="project" value="UniProtKB"/>
</dbReference>
<dbReference type="GO" id="GO:0030334">
    <property type="term" value="P:regulation of cell migration"/>
    <property type="evidence" value="ECO:0000318"/>
    <property type="project" value="GO_Central"/>
</dbReference>
<dbReference type="InterPro" id="IPR004250">
    <property type="entry name" value="Somatostatin"/>
</dbReference>
<dbReference type="InterPro" id="IPR018142">
    <property type="entry name" value="Somatostatin/Cortistatin_C"/>
</dbReference>
<dbReference type="PANTHER" id="PTHR10558:SF1">
    <property type="entry name" value="CORTISTATIN"/>
    <property type="match status" value="1"/>
</dbReference>
<dbReference type="PANTHER" id="PTHR10558">
    <property type="entry name" value="SOMATOSTATIN"/>
    <property type="match status" value="1"/>
</dbReference>
<dbReference type="Pfam" id="PF03002">
    <property type="entry name" value="Somatostatin"/>
    <property type="match status" value="1"/>
</dbReference>
<dbReference type="PIRSF" id="PIRSF001814">
    <property type="entry name" value="Somatostatin"/>
    <property type="match status" value="1"/>
</dbReference>
<proteinExistence type="evidence at protein level"/>
<reference key="1">
    <citation type="journal article" date="1997" name="Biochem. Biophys. Res. Commun.">
        <title>Identification and characterization of a novel human cortistatin-like peptide.</title>
        <authorList>
            <person name="Fukusumi S."/>
            <person name="Kitada C."/>
            <person name="Takekawa S."/>
            <person name="Kizawa H."/>
            <person name="Sakamoto J."/>
            <person name="Miyamoto M."/>
            <person name="Hinuma S."/>
            <person name="Kitano K."/>
            <person name="Fujino M."/>
        </authorList>
    </citation>
    <scope>NUCLEOTIDE SEQUENCE [MRNA]</scope>
    <source>
        <tissue>Brain</tissue>
    </source>
</reference>
<reference key="2">
    <citation type="journal article" date="1997" name="Genomics">
        <title>Cloning, mRNA expression, and chromosomal mapping of mouse and human preprocortistatin.</title>
        <authorList>
            <person name="de Lecea L."/>
            <person name="Ruiz-Lozano P."/>
            <person name="Danielson P.E."/>
            <person name="Peelle-Kirley J."/>
            <person name="Foye P.E."/>
            <person name="Frankel W.N."/>
            <person name="Sutcliffe J.G."/>
        </authorList>
    </citation>
    <scope>NUCLEOTIDE SEQUENCE [MRNA]</scope>
</reference>
<reference key="3">
    <citation type="journal article" date="2006" name="Nature">
        <title>The DNA sequence and biological annotation of human chromosome 1.</title>
        <authorList>
            <person name="Gregory S.G."/>
            <person name="Barlow K.F."/>
            <person name="McLay K.E."/>
            <person name="Kaul R."/>
            <person name="Swarbreck D."/>
            <person name="Dunham A."/>
            <person name="Scott C.E."/>
            <person name="Howe K.L."/>
            <person name="Woodfine K."/>
            <person name="Spencer C.C.A."/>
            <person name="Jones M.C."/>
            <person name="Gillson C."/>
            <person name="Searle S."/>
            <person name="Zhou Y."/>
            <person name="Kokocinski F."/>
            <person name="McDonald L."/>
            <person name="Evans R."/>
            <person name="Phillips K."/>
            <person name="Atkinson A."/>
            <person name="Cooper R."/>
            <person name="Jones C."/>
            <person name="Hall R.E."/>
            <person name="Andrews T.D."/>
            <person name="Lloyd C."/>
            <person name="Ainscough R."/>
            <person name="Almeida J.P."/>
            <person name="Ambrose K.D."/>
            <person name="Anderson F."/>
            <person name="Andrew R.W."/>
            <person name="Ashwell R.I.S."/>
            <person name="Aubin K."/>
            <person name="Babbage A.K."/>
            <person name="Bagguley C.L."/>
            <person name="Bailey J."/>
            <person name="Beasley H."/>
            <person name="Bethel G."/>
            <person name="Bird C.P."/>
            <person name="Bray-Allen S."/>
            <person name="Brown J.Y."/>
            <person name="Brown A.J."/>
            <person name="Buckley D."/>
            <person name="Burton J."/>
            <person name="Bye J."/>
            <person name="Carder C."/>
            <person name="Chapman J.C."/>
            <person name="Clark S.Y."/>
            <person name="Clarke G."/>
            <person name="Clee C."/>
            <person name="Cobley V."/>
            <person name="Collier R.E."/>
            <person name="Corby N."/>
            <person name="Coville G.J."/>
            <person name="Davies J."/>
            <person name="Deadman R."/>
            <person name="Dunn M."/>
            <person name="Earthrowl M."/>
            <person name="Ellington A.G."/>
            <person name="Errington H."/>
            <person name="Frankish A."/>
            <person name="Frankland J."/>
            <person name="French L."/>
            <person name="Garner P."/>
            <person name="Garnett J."/>
            <person name="Gay L."/>
            <person name="Ghori M.R.J."/>
            <person name="Gibson R."/>
            <person name="Gilby L.M."/>
            <person name="Gillett W."/>
            <person name="Glithero R.J."/>
            <person name="Grafham D.V."/>
            <person name="Griffiths C."/>
            <person name="Griffiths-Jones S."/>
            <person name="Grocock R."/>
            <person name="Hammond S."/>
            <person name="Harrison E.S.I."/>
            <person name="Hart E."/>
            <person name="Haugen E."/>
            <person name="Heath P.D."/>
            <person name="Holmes S."/>
            <person name="Holt K."/>
            <person name="Howden P.J."/>
            <person name="Hunt A.R."/>
            <person name="Hunt S.E."/>
            <person name="Hunter G."/>
            <person name="Isherwood J."/>
            <person name="James R."/>
            <person name="Johnson C."/>
            <person name="Johnson D."/>
            <person name="Joy A."/>
            <person name="Kay M."/>
            <person name="Kershaw J.K."/>
            <person name="Kibukawa M."/>
            <person name="Kimberley A.M."/>
            <person name="King A."/>
            <person name="Knights A.J."/>
            <person name="Lad H."/>
            <person name="Laird G."/>
            <person name="Lawlor S."/>
            <person name="Leongamornlert D.A."/>
            <person name="Lloyd D.M."/>
            <person name="Loveland J."/>
            <person name="Lovell J."/>
            <person name="Lush M.J."/>
            <person name="Lyne R."/>
            <person name="Martin S."/>
            <person name="Mashreghi-Mohammadi M."/>
            <person name="Matthews L."/>
            <person name="Matthews N.S.W."/>
            <person name="McLaren S."/>
            <person name="Milne S."/>
            <person name="Mistry S."/>
            <person name="Moore M.J.F."/>
            <person name="Nickerson T."/>
            <person name="O'Dell C.N."/>
            <person name="Oliver K."/>
            <person name="Palmeiri A."/>
            <person name="Palmer S.A."/>
            <person name="Parker A."/>
            <person name="Patel D."/>
            <person name="Pearce A.V."/>
            <person name="Peck A.I."/>
            <person name="Pelan S."/>
            <person name="Phelps K."/>
            <person name="Phillimore B.J."/>
            <person name="Plumb R."/>
            <person name="Rajan J."/>
            <person name="Raymond C."/>
            <person name="Rouse G."/>
            <person name="Saenphimmachak C."/>
            <person name="Sehra H.K."/>
            <person name="Sheridan E."/>
            <person name="Shownkeen R."/>
            <person name="Sims S."/>
            <person name="Skuce C.D."/>
            <person name="Smith M."/>
            <person name="Steward C."/>
            <person name="Subramanian S."/>
            <person name="Sycamore N."/>
            <person name="Tracey A."/>
            <person name="Tromans A."/>
            <person name="Van Helmond Z."/>
            <person name="Wall M."/>
            <person name="Wallis J.M."/>
            <person name="White S."/>
            <person name="Whitehead S.L."/>
            <person name="Wilkinson J.E."/>
            <person name="Willey D.L."/>
            <person name="Williams H."/>
            <person name="Wilming L."/>
            <person name="Wray P.W."/>
            <person name="Wu Z."/>
            <person name="Coulson A."/>
            <person name="Vaudin M."/>
            <person name="Sulston J.E."/>
            <person name="Durbin R.M."/>
            <person name="Hubbard T."/>
            <person name="Wooster R."/>
            <person name="Dunham I."/>
            <person name="Carter N.P."/>
            <person name="McVean G."/>
            <person name="Ross M.T."/>
            <person name="Harrow J."/>
            <person name="Olson M.V."/>
            <person name="Beck S."/>
            <person name="Rogers J."/>
            <person name="Bentley D.R."/>
        </authorList>
    </citation>
    <scope>NUCLEOTIDE SEQUENCE [LARGE SCALE GENOMIC DNA]</scope>
</reference>
<reference key="4">
    <citation type="submission" date="2005-07" db="EMBL/GenBank/DDBJ databases">
        <authorList>
            <person name="Mural R.J."/>
            <person name="Istrail S."/>
            <person name="Sutton G.G."/>
            <person name="Florea L."/>
            <person name="Halpern A.L."/>
            <person name="Mobarry C.M."/>
            <person name="Lippert R."/>
            <person name="Walenz B."/>
            <person name="Shatkay H."/>
            <person name="Dew I."/>
            <person name="Miller J.R."/>
            <person name="Flanigan M.J."/>
            <person name="Edwards N.J."/>
            <person name="Bolanos R."/>
            <person name="Fasulo D."/>
            <person name="Halldorsson B.V."/>
            <person name="Hannenhalli S."/>
            <person name="Turner R."/>
            <person name="Yooseph S."/>
            <person name="Lu F."/>
            <person name="Nusskern D.R."/>
            <person name="Shue B.C."/>
            <person name="Zheng X.H."/>
            <person name="Zhong F."/>
            <person name="Delcher A.L."/>
            <person name="Huson D.H."/>
            <person name="Kravitz S.A."/>
            <person name="Mouchard L."/>
            <person name="Reinert K."/>
            <person name="Remington K.A."/>
            <person name="Clark A.G."/>
            <person name="Waterman M.S."/>
            <person name="Eichler E.E."/>
            <person name="Adams M.D."/>
            <person name="Hunkapiller M.W."/>
            <person name="Myers E.W."/>
            <person name="Venter J.C."/>
        </authorList>
    </citation>
    <scope>NUCLEOTIDE SEQUENCE [LARGE SCALE GENOMIC DNA]</scope>
</reference>
<reference key="5">
    <citation type="journal article" date="2004" name="Genome Res.">
        <title>The status, quality, and expansion of the NIH full-length cDNA project: the Mammalian Gene Collection (MGC).</title>
        <authorList>
            <consortium name="The MGC Project Team"/>
        </authorList>
    </citation>
    <scope>NUCLEOTIDE SEQUENCE [LARGE SCALE MRNA]</scope>
</reference>
<reference key="6">
    <citation type="journal article" date="2003" name="Genome Res.">
        <title>The secreted protein discovery initiative (SPDI), a large-scale effort to identify novel human secreted and transmembrane proteins: a bioinformatics assessment.</title>
        <authorList>
            <person name="Clark H.F."/>
            <person name="Gurney A.L."/>
            <person name="Abaya E."/>
            <person name="Baker K."/>
            <person name="Baldwin D.T."/>
            <person name="Brush J."/>
            <person name="Chen J."/>
            <person name="Chow B."/>
            <person name="Chui C."/>
            <person name="Crowley C."/>
            <person name="Currell B."/>
            <person name="Deuel B."/>
            <person name="Dowd P."/>
            <person name="Eaton D."/>
            <person name="Foster J.S."/>
            <person name="Grimaldi C."/>
            <person name="Gu Q."/>
            <person name="Hass P.E."/>
            <person name="Heldens S."/>
            <person name="Huang A."/>
            <person name="Kim H.S."/>
            <person name="Klimowski L."/>
            <person name="Jin Y."/>
            <person name="Johnson S."/>
            <person name="Lee J."/>
            <person name="Lewis L."/>
            <person name="Liao D."/>
            <person name="Mark M.R."/>
            <person name="Robbie E."/>
            <person name="Sanchez C."/>
            <person name="Schoenfeld J."/>
            <person name="Seshagiri S."/>
            <person name="Simmons L."/>
            <person name="Singh J."/>
            <person name="Smith V."/>
            <person name="Stinson J."/>
            <person name="Vagts A."/>
            <person name="Vandlen R.L."/>
            <person name="Watanabe C."/>
            <person name="Wieand D."/>
            <person name="Woods K."/>
            <person name="Xie M.-H."/>
            <person name="Yansura D.G."/>
            <person name="Yi S."/>
            <person name="Yu G."/>
            <person name="Yuan J."/>
            <person name="Zhang M."/>
            <person name="Zhang Z."/>
            <person name="Goddard A.D."/>
            <person name="Wood W.I."/>
            <person name="Godowski P.J."/>
            <person name="Gray A.M."/>
        </authorList>
    </citation>
    <scope>NUCLEOTIDE SEQUENCE [LARGE SCALE MRNA] OF 1-104</scope>
</reference>
<keyword id="KW-0002">3D-structure</keyword>
<keyword id="KW-0165">Cleavage on pair of basic residues</keyword>
<keyword id="KW-1015">Disulfide bond</keyword>
<keyword id="KW-0372">Hormone</keyword>
<keyword id="KW-1267">Proteomics identification</keyword>
<keyword id="KW-1185">Reference proteome</keyword>
<keyword id="KW-0964">Secreted</keyword>
<keyword id="KW-0732">Signal</keyword>
<evidence type="ECO:0000250" key="1"/>
<evidence type="ECO:0000255" key="2"/>
<evidence type="ECO:0000305" key="3"/>
<evidence type="ECO:0007829" key="4">
    <source>
        <dbReference type="PDB" id="8X8L"/>
    </source>
</evidence>
<name>CORT_HUMAN</name>
<gene>
    <name type="primary">CORT</name>
    <name type="ORF">UNQ307/PRO350</name>
</gene>
<feature type="signal peptide" evidence="2">
    <location>
        <begin position="1"/>
        <end position="18"/>
    </location>
</feature>
<feature type="propeptide" id="PRO_0000033154" evidence="2">
    <location>
        <begin position="19"/>
        <end position="74"/>
    </location>
</feature>
<feature type="peptide" id="PRO_0000033155" description="Cortistatin-29" evidence="2">
    <location>
        <begin position="77"/>
        <end position="105"/>
    </location>
</feature>
<feature type="peptide" id="PRO_0000033156" description="Cortistatin-17">
    <location>
        <begin position="89"/>
        <end position="105"/>
    </location>
</feature>
<feature type="disulfide bond" evidence="1">
    <location>
        <begin position="93"/>
        <end position="104"/>
    </location>
</feature>
<feature type="strand" evidence="4">
    <location>
        <begin position="94"/>
        <end position="103"/>
    </location>
</feature>
<comment type="function">
    <text>Binds to all human somatostatin receptor (SSTR) subtypes. It also inhibits cAMP production induced by forskolin through SSTRs.</text>
</comment>
<comment type="interaction">
    <interactant intactId="EBI-20824070">
        <id>O00230</id>
    </interactant>
    <interactant intactId="EBI-15106010">
        <id>P02144</id>
        <label>MB</label>
    </interactant>
    <organismsDiffer>false</organismsDiffer>
    <experiments>2</experiments>
</comment>
<comment type="interaction">
    <interactant intactId="EBI-20824092">
        <id>PRO_0000033156</id>
    </interactant>
    <interactant intactId="EBI-821758">
        <id>PRO_0000000092</id>
        <label>APP</label>
        <dbReference type="UniProtKB" id="P05067"/>
    </interactant>
    <organismsDiffer>false</organismsDiffer>
    <experiments>4</experiments>
</comment>
<comment type="subcellular location">
    <subcellularLocation>
        <location>Secreted</location>
    </subcellularLocation>
</comment>
<comment type="tissue specificity">
    <text>Expressed in a subset of GABAergic cells in the cortex and hippocampus.</text>
</comment>
<comment type="similarity">
    <text evidence="3">Belongs to the somatostatin family.</text>
</comment>
<comment type="sequence caution" evidence="3">
    <conflict type="erroneous initiation">
        <sequence resource="EMBL-CDS" id="AAI19725"/>
    </conflict>
</comment>
<comment type="sequence caution" evidence="3">
    <conflict type="erroneous initiation">
        <sequence resource="EMBL-CDS" id="AAI19726"/>
    </conflict>
</comment>
<comment type="sequence caution" evidence="3">
    <conflict type="erroneous initiation">
        <sequence resource="EMBL-CDS" id="AAQ89950"/>
    </conflict>
</comment>
<comment type="sequence caution" evidence="3">
    <conflict type="erroneous initiation">
        <sequence resource="EMBL-CDS" id="EAW71650"/>
    </conflict>
</comment>